<dbReference type="EC" id="2.7.1.40" evidence="6"/>
<dbReference type="EMBL" id="CM000137">
    <property type="protein sequence ID" value="EEC68859.1"/>
    <property type="molecule type" value="Genomic_DNA"/>
</dbReference>
<dbReference type="SMR" id="B8BM17"/>
<dbReference type="STRING" id="39946.B8BM17"/>
<dbReference type="iPTMnet" id="B8BM17"/>
<dbReference type="EnsemblPlants" id="BGIOSGA036640-TA">
    <property type="protein sequence ID" value="BGIOSGA036640-PA"/>
    <property type="gene ID" value="BGIOSGA036640"/>
</dbReference>
<dbReference type="EnsemblPlants" id="OsGoSa_12g0003370.01">
    <property type="protein sequence ID" value="OsGoSa_12g0003370.01"/>
    <property type="gene ID" value="OsGoSa_12g0003370"/>
</dbReference>
<dbReference type="EnsemblPlants" id="OsIR64_12g0003340.01">
    <property type="protein sequence ID" value="OsIR64_12g0003340.01"/>
    <property type="gene ID" value="OsIR64_12g0003340"/>
</dbReference>
<dbReference type="EnsemblPlants" id="OsKYG_12g0003340.01">
    <property type="protein sequence ID" value="OsKYG_12g0003340.01"/>
    <property type="gene ID" value="OsKYG_12g0003340"/>
</dbReference>
<dbReference type="EnsemblPlants" id="OsLaMu_12g0003260.01">
    <property type="protein sequence ID" value="OsLaMu_12g0003260.01"/>
    <property type="gene ID" value="OsLaMu_12g0003260"/>
</dbReference>
<dbReference type="EnsemblPlants" id="OsLima_12g0003130.01">
    <property type="protein sequence ID" value="OsLima_12g0003130.01"/>
    <property type="gene ID" value="OsLima_12g0003130"/>
</dbReference>
<dbReference type="EnsemblPlants" id="OsLiXu_12g0003300.01">
    <property type="protein sequence ID" value="OsLiXu_12g0003300.01"/>
    <property type="gene ID" value="OsLiXu_12g0003300"/>
</dbReference>
<dbReference type="EnsemblPlants" id="OsMH63_12G003430_01">
    <property type="protein sequence ID" value="OsMH63_12G003430_01"/>
    <property type="gene ID" value="OsMH63_12G003430"/>
</dbReference>
<dbReference type="EnsemblPlants" id="OsPr106_12g0003360.01">
    <property type="protein sequence ID" value="OsPr106_12g0003360.01"/>
    <property type="gene ID" value="OsPr106_12g0003360"/>
</dbReference>
<dbReference type="EnsemblPlants" id="OsZS97_12G003320_01">
    <property type="protein sequence ID" value="OsZS97_12G003320_01"/>
    <property type="gene ID" value="OsZS97_12G003320"/>
</dbReference>
<dbReference type="Gramene" id="BGIOSGA036640-TA">
    <property type="protein sequence ID" value="BGIOSGA036640-PA"/>
    <property type="gene ID" value="BGIOSGA036640"/>
</dbReference>
<dbReference type="Gramene" id="OsGoSa_12g0003370.01">
    <property type="protein sequence ID" value="OsGoSa_12g0003370.01"/>
    <property type="gene ID" value="OsGoSa_12g0003370"/>
</dbReference>
<dbReference type="Gramene" id="OsIR64_12g0003340.01">
    <property type="protein sequence ID" value="OsIR64_12g0003340.01"/>
    <property type="gene ID" value="OsIR64_12g0003340"/>
</dbReference>
<dbReference type="Gramene" id="OsKYG_12g0003340.01">
    <property type="protein sequence ID" value="OsKYG_12g0003340.01"/>
    <property type="gene ID" value="OsKYG_12g0003340"/>
</dbReference>
<dbReference type="Gramene" id="OsLaMu_12g0003260.01">
    <property type="protein sequence ID" value="OsLaMu_12g0003260.01"/>
    <property type="gene ID" value="OsLaMu_12g0003260"/>
</dbReference>
<dbReference type="Gramene" id="OsLima_12g0003130.01">
    <property type="protein sequence ID" value="OsLima_12g0003130.01"/>
    <property type="gene ID" value="OsLima_12g0003130"/>
</dbReference>
<dbReference type="Gramene" id="OsLiXu_12g0003300.01">
    <property type="protein sequence ID" value="OsLiXu_12g0003300.01"/>
    <property type="gene ID" value="OsLiXu_12g0003300"/>
</dbReference>
<dbReference type="Gramene" id="OsMH63_12G003430_01">
    <property type="protein sequence ID" value="OsMH63_12G003430_01"/>
    <property type="gene ID" value="OsMH63_12G003430"/>
</dbReference>
<dbReference type="Gramene" id="OsPr106_12g0003360.01">
    <property type="protein sequence ID" value="OsPr106_12g0003360.01"/>
    <property type="gene ID" value="OsPr106_12g0003360"/>
</dbReference>
<dbReference type="Gramene" id="OsZS97_12G003320_01">
    <property type="protein sequence ID" value="OsZS97_12G003320_01"/>
    <property type="gene ID" value="OsZS97_12G003320"/>
</dbReference>
<dbReference type="HOGENOM" id="CLU_015439_9_1_1"/>
<dbReference type="OMA" id="AMSKPHR"/>
<dbReference type="OrthoDB" id="108365at2759"/>
<dbReference type="UniPathway" id="UPA00109">
    <property type="reaction ID" value="UER00188"/>
</dbReference>
<dbReference type="Proteomes" id="UP000007015">
    <property type="component" value="Chromosome 12"/>
</dbReference>
<dbReference type="GO" id="GO:0005829">
    <property type="term" value="C:cytosol"/>
    <property type="evidence" value="ECO:0007669"/>
    <property type="project" value="UniProtKB-SubCell"/>
</dbReference>
<dbReference type="GO" id="GO:0005524">
    <property type="term" value="F:ATP binding"/>
    <property type="evidence" value="ECO:0007669"/>
    <property type="project" value="UniProtKB-KW"/>
</dbReference>
<dbReference type="GO" id="GO:0016301">
    <property type="term" value="F:kinase activity"/>
    <property type="evidence" value="ECO:0007669"/>
    <property type="project" value="UniProtKB-KW"/>
</dbReference>
<dbReference type="GO" id="GO:0000287">
    <property type="term" value="F:magnesium ion binding"/>
    <property type="evidence" value="ECO:0007669"/>
    <property type="project" value="InterPro"/>
</dbReference>
<dbReference type="GO" id="GO:0030955">
    <property type="term" value="F:potassium ion binding"/>
    <property type="evidence" value="ECO:0007669"/>
    <property type="project" value="InterPro"/>
</dbReference>
<dbReference type="GO" id="GO:0004743">
    <property type="term" value="F:pyruvate kinase activity"/>
    <property type="evidence" value="ECO:0007669"/>
    <property type="project" value="UniProtKB-EC"/>
</dbReference>
<dbReference type="FunFam" id="2.40.33.10:FF:000004">
    <property type="entry name" value="Pyruvate kinase"/>
    <property type="match status" value="1"/>
</dbReference>
<dbReference type="FunFam" id="3.40.1380.20:FF:000006">
    <property type="entry name" value="Pyruvate kinase"/>
    <property type="match status" value="1"/>
</dbReference>
<dbReference type="Gene3D" id="3.20.20.60">
    <property type="entry name" value="Phosphoenolpyruvate-binding domains"/>
    <property type="match status" value="1"/>
</dbReference>
<dbReference type="Gene3D" id="2.40.33.10">
    <property type="entry name" value="PK beta-barrel domain-like"/>
    <property type="match status" value="1"/>
</dbReference>
<dbReference type="Gene3D" id="3.40.1380.20">
    <property type="entry name" value="Pyruvate kinase, C-terminal domain"/>
    <property type="match status" value="1"/>
</dbReference>
<dbReference type="InterPro" id="IPR001697">
    <property type="entry name" value="Pyr_Knase"/>
</dbReference>
<dbReference type="InterPro" id="IPR015813">
    <property type="entry name" value="Pyrv/PenolPyrv_kinase-like_dom"/>
</dbReference>
<dbReference type="InterPro" id="IPR040442">
    <property type="entry name" value="Pyrv_kinase-like_dom_sf"/>
</dbReference>
<dbReference type="InterPro" id="IPR011037">
    <property type="entry name" value="Pyrv_Knase-like_insert_dom_sf"/>
</dbReference>
<dbReference type="InterPro" id="IPR015793">
    <property type="entry name" value="Pyrv_Knase_brl"/>
</dbReference>
<dbReference type="InterPro" id="IPR015795">
    <property type="entry name" value="Pyrv_Knase_C"/>
</dbReference>
<dbReference type="InterPro" id="IPR036918">
    <property type="entry name" value="Pyrv_Knase_C_sf"/>
</dbReference>
<dbReference type="InterPro" id="IPR015806">
    <property type="entry name" value="Pyrv_Knase_insert_dom_sf"/>
</dbReference>
<dbReference type="NCBIfam" id="TIGR01064">
    <property type="entry name" value="pyruv_kin"/>
    <property type="match status" value="1"/>
</dbReference>
<dbReference type="PANTHER" id="PTHR11817">
    <property type="entry name" value="PYRUVATE KINASE"/>
    <property type="match status" value="1"/>
</dbReference>
<dbReference type="Pfam" id="PF00224">
    <property type="entry name" value="PK"/>
    <property type="match status" value="1"/>
</dbReference>
<dbReference type="Pfam" id="PF02887">
    <property type="entry name" value="PK_C"/>
    <property type="match status" value="1"/>
</dbReference>
<dbReference type="PRINTS" id="PR01050">
    <property type="entry name" value="PYRUVTKNASE"/>
</dbReference>
<dbReference type="SUPFAM" id="SSF51621">
    <property type="entry name" value="Phosphoenolpyruvate/pyruvate domain"/>
    <property type="match status" value="1"/>
</dbReference>
<dbReference type="SUPFAM" id="SSF50800">
    <property type="entry name" value="PK beta-barrel domain-like"/>
    <property type="match status" value="1"/>
</dbReference>
<dbReference type="SUPFAM" id="SSF52935">
    <property type="entry name" value="PK C-terminal domain-like"/>
    <property type="match status" value="1"/>
</dbReference>
<accession>B8BM17</accession>
<gene>
    <name evidence="7" type="ORF">OsI_37456</name>
</gene>
<proteinExistence type="inferred from homology"/>
<name>KPYC2_ORYSI</name>
<comment type="function">
    <text evidence="4">Key regulatory enzyme of the glycolytic pathway that catalyzes the final step of glycolysis, converting ADP and phosphoenolpyruvate (PEP) to ATP and pyruvate by essentially irreversible transphosphorylation.</text>
</comment>
<comment type="catalytic activity">
    <reaction evidence="6">
        <text>pyruvate + ATP = phosphoenolpyruvate + ADP + H(+)</text>
        <dbReference type="Rhea" id="RHEA:18157"/>
        <dbReference type="ChEBI" id="CHEBI:15361"/>
        <dbReference type="ChEBI" id="CHEBI:15378"/>
        <dbReference type="ChEBI" id="CHEBI:30616"/>
        <dbReference type="ChEBI" id="CHEBI:58702"/>
        <dbReference type="ChEBI" id="CHEBI:456216"/>
        <dbReference type="EC" id="2.7.1.40"/>
    </reaction>
</comment>
<comment type="cofactor">
    <cofactor evidence="5">
        <name>Mg(2+)</name>
        <dbReference type="ChEBI" id="CHEBI:18420"/>
    </cofactor>
</comment>
<comment type="cofactor">
    <cofactor evidence="5">
        <name>K(+)</name>
        <dbReference type="ChEBI" id="CHEBI:29103"/>
    </cofactor>
</comment>
<comment type="pathway">
    <text evidence="6">Carbohydrate degradation; glycolysis; pyruvate from D-glyceraldehyde 3-phosphate: step 5/5.</text>
</comment>
<comment type="subunit">
    <text evidence="3">Homotetramer.</text>
</comment>
<comment type="subcellular location">
    <subcellularLocation>
        <location evidence="4">Cytoplasm</location>
        <location evidence="4">Cytosol</location>
    </subcellularLocation>
</comment>
<comment type="similarity">
    <text evidence="6">Belongs to the pyruvate kinase family.</text>
</comment>
<protein>
    <recommendedName>
        <fullName evidence="6">Pyruvate kinase 2, cytosolic</fullName>
        <shortName evidence="6">OsPK2</shortName>
        <ecNumber evidence="6">2.7.1.40</ecNumber>
    </recommendedName>
</protein>
<sequence>MHSTNLLLEEPIRMASILEPSKPSFFPAMTKIVGTLGPKSRSVDTISSCLKAGMSVARFDFSWGDAEYHQETLENLKVAIKSTKKLCAVMLDTVGPELQVVNKSEASISLEENGTVILTPDQGQEASSQVLPINFAGLAKAVKPGDTIFVGQYLFTGSETTSVWLEVSQIKGDDVVCVIKNTATLAGSLFTLHCSQIHIDLPTLSDEDKEVIRKWGAPNKIDFLSLSYTRHVEDVRQAREFLSKLGDLSQTQIFAKIENVEGLNNFDEILQEADGIILSRGNLGIDLPPEKVFLFQKSALHKCNMAGKPAVVTRVVDSMTDNLRPTRAEATDVANAVLDGSDAILLGAETLRGLYPVETISIVGKICAEAEKVFNQDLYFKRTVKHVGEPMTHLESIASSAVRAAIKVKASVIICFTSSGRAARLIAKYRPTMPVLSVVIPRLKTNQLRWSFTGAFEARQSLIVRGLFPMLADPRHPAESTNATNESVLKVALDHGKVSGVIKSHDRVVVCQKVGDSSVVKIIELDD</sequence>
<reference key="1">
    <citation type="journal article" date="2005" name="PLoS Biol.">
        <title>The genomes of Oryza sativa: a history of duplications.</title>
        <authorList>
            <person name="Yu J."/>
            <person name="Wang J."/>
            <person name="Lin W."/>
            <person name="Li S."/>
            <person name="Li H."/>
            <person name="Zhou J."/>
            <person name="Ni P."/>
            <person name="Dong W."/>
            <person name="Hu S."/>
            <person name="Zeng C."/>
            <person name="Zhang J."/>
            <person name="Zhang Y."/>
            <person name="Li R."/>
            <person name="Xu Z."/>
            <person name="Li S."/>
            <person name="Li X."/>
            <person name="Zheng H."/>
            <person name="Cong L."/>
            <person name="Lin L."/>
            <person name="Yin J."/>
            <person name="Geng J."/>
            <person name="Li G."/>
            <person name="Shi J."/>
            <person name="Liu J."/>
            <person name="Lv H."/>
            <person name="Li J."/>
            <person name="Wang J."/>
            <person name="Deng Y."/>
            <person name="Ran L."/>
            <person name="Shi X."/>
            <person name="Wang X."/>
            <person name="Wu Q."/>
            <person name="Li C."/>
            <person name="Ren X."/>
            <person name="Wang J."/>
            <person name="Wang X."/>
            <person name="Li D."/>
            <person name="Liu D."/>
            <person name="Zhang X."/>
            <person name="Ji Z."/>
            <person name="Zhao W."/>
            <person name="Sun Y."/>
            <person name="Zhang Z."/>
            <person name="Bao J."/>
            <person name="Han Y."/>
            <person name="Dong L."/>
            <person name="Ji J."/>
            <person name="Chen P."/>
            <person name="Wu S."/>
            <person name="Liu J."/>
            <person name="Xiao Y."/>
            <person name="Bu D."/>
            <person name="Tan J."/>
            <person name="Yang L."/>
            <person name="Ye C."/>
            <person name="Zhang J."/>
            <person name="Xu J."/>
            <person name="Zhou Y."/>
            <person name="Yu Y."/>
            <person name="Zhang B."/>
            <person name="Zhuang S."/>
            <person name="Wei H."/>
            <person name="Liu B."/>
            <person name="Lei M."/>
            <person name="Yu H."/>
            <person name="Li Y."/>
            <person name="Xu H."/>
            <person name="Wei S."/>
            <person name="He X."/>
            <person name="Fang L."/>
            <person name="Zhang Z."/>
            <person name="Zhang Y."/>
            <person name="Huang X."/>
            <person name="Su Z."/>
            <person name="Tong W."/>
            <person name="Li J."/>
            <person name="Tong Z."/>
            <person name="Li S."/>
            <person name="Ye J."/>
            <person name="Wang L."/>
            <person name="Fang L."/>
            <person name="Lei T."/>
            <person name="Chen C.-S."/>
            <person name="Chen H.-C."/>
            <person name="Xu Z."/>
            <person name="Li H."/>
            <person name="Huang H."/>
            <person name="Zhang F."/>
            <person name="Xu H."/>
            <person name="Li N."/>
            <person name="Zhao C."/>
            <person name="Li S."/>
            <person name="Dong L."/>
            <person name="Huang Y."/>
            <person name="Li L."/>
            <person name="Xi Y."/>
            <person name="Qi Q."/>
            <person name="Li W."/>
            <person name="Zhang B."/>
            <person name="Hu W."/>
            <person name="Zhang Y."/>
            <person name="Tian X."/>
            <person name="Jiao Y."/>
            <person name="Liang X."/>
            <person name="Jin J."/>
            <person name="Gao L."/>
            <person name="Zheng W."/>
            <person name="Hao B."/>
            <person name="Liu S.-M."/>
            <person name="Wang W."/>
            <person name="Yuan L."/>
            <person name="Cao M."/>
            <person name="McDermott J."/>
            <person name="Samudrala R."/>
            <person name="Wang J."/>
            <person name="Wong G.K.-S."/>
            <person name="Yang H."/>
        </authorList>
    </citation>
    <scope>NUCLEOTIDE SEQUENCE [LARGE SCALE GENOMIC DNA]</scope>
    <source>
        <strain>cv. 93-11</strain>
    </source>
</reference>
<keyword id="KW-0067">ATP-binding</keyword>
<keyword id="KW-0963">Cytoplasm</keyword>
<keyword id="KW-0324">Glycolysis</keyword>
<keyword id="KW-0418">Kinase</keyword>
<keyword id="KW-0460">Magnesium</keyword>
<keyword id="KW-0479">Metal-binding</keyword>
<keyword id="KW-0547">Nucleotide-binding</keyword>
<keyword id="KW-0630">Potassium</keyword>
<keyword id="KW-0670">Pyruvate</keyword>
<keyword id="KW-1185">Reference proteome</keyword>
<keyword id="KW-0808">Transferase</keyword>
<feature type="chain" id="PRO_0000433958" description="Pyruvate kinase 2, cytosolic">
    <location>
        <begin position="1"/>
        <end position="527"/>
    </location>
</feature>
<feature type="binding site" evidence="3">
    <location>
        <position position="58"/>
    </location>
    <ligand>
        <name>substrate</name>
    </ligand>
</feature>
<feature type="binding site" evidence="2">
    <location>
        <begin position="60"/>
        <end position="63"/>
    </location>
    <ligand>
        <name>ATP</name>
        <dbReference type="ChEBI" id="CHEBI:30616"/>
    </ligand>
</feature>
<feature type="binding site" evidence="3">
    <location>
        <position position="60"/>
    </location>
    <ligand>
        <name>K(+)</name>
        <dbReference type="ChEBI" id="CHEBI:29103"/>
    </ligand>
</feature>
<feature type="binding site" evidence="3">
    <location>
        <position position="62"/>
    </location>
    <ligand>
        <name>K(+)</name>
        <dbReference type="ChEBI" id="CHEBI:29103"/>
    </ligand>
</feature>
<feature type="binding site" evidence="3">
    <location>
        <position position="92"/>
    </location>
    <ligand>
        <name>K(+)</name>
        <dbReference type="ChEBI" id="CHEBI:29103"/>
    </ligand>
</feature>
<feature type="binding site" evidence="3">
    <location>
        <position position="93"/>
    </location>
    <ligand>
        <name>K(+)</name>
        <dbReference type="ChEBI" id="CHEBI:29103"/>
    </ligand>
</feature>
<feature type="binding site" evidence="3">
    <location>
        <position position="256"/>
    </location>
    <ligand>
        <name>substrate</name>
    </ligand>
</feature>
<feature type="binding site" evidence="2">
    <location>
        <position position="258"/>
    </location>
    <ligand>
        <name>Mg(2+)</name>
        <dbReference type="ChEBI" id="CHEBI:18420"/>
    </ligand>
</feature>
<feature type="binding site" evidence="3">
    <location>
        <position position="281"/>
    </location>
    <ligand>
        <name>substrate</name>
    </ligand>
</feature>
<feature type="binding site" evidence="2">
    <location>
        <position position="282"/>
    </location>
    <ligand>
        <name>Mg(2+)</name>
        <dbReference type="ChEBI" id="CHEBI:18420"/>
    </ligand>
</feature>
<feature type="binding site" evidence="3">
    <location>
        <position position="282"/>
    </location>
    <ligand>
        <name>substrate</name>
    </ligand>
</feature>
<feature type="binding site" evidence="3">
    <location>
        <position position="313"/>
    </location>
    <ligand>
        <name>substrate</name>
    </ligand>
</feature>
<feature type="site" description="Transition state stabilizer" evidence="1">
    <location>
        <position position="256"/>
    </location>
</feature>
<organism>
    <name type="scientific">Oryza sativa subsp. indica</name>
    <name type="common">Rice</name>
    <dbReference type="NCBI Taxonomy" id="39946"/>
    <lineage>
        <taxon>Eukaryota</taxon>
        <taxon>Viridiplantae</taxon>
        <taxon>Streptophyta</taxon>
        <taxon>Embryophyta</taxon>
        <taxon>Tracheophyta</taxon>
        <taxon>Spermatophyta</taxon>
        <taxon>Magnoliopsida</taxon>
        <taxon>Liliopsida</taxon>
        <taxon>Poales</taxon>
        <taxon>Poaceae</taxon>
        <taxon>BOP clade</taxon>
        <taxon>Oryzoideae</taxon>
        <taxon>Oryzeae</taxon>
        <taxon>Oryzinae</taxon>
        <taxon>Oryza</taxon>
        <taxon>Oryza sativa</taxon>
    </lineage>
</organism>
<evidence type="ECO:0000250" key="1">
    <source>
        <dbReference type="UniProtKB" id="P00549"/>
    </source>
</evidence>
<evidence type="ECO:0000250" key="2">
    <source>
        <dbReference type="UniProtKB" id="P14618"/>
    </source>
</evidence>
<evidence type="ECO:0000250" key="3">
    <source>
        <dbReference type="UniProtKB" id="P30613"/>
    </source>
</evidence>
<evidence type="ECO:0000250" key="4">
    <source>
        <dbReference type="UniProtKB" id="Q2RAK2"/>
    </source>
</evidence>
<evidence type="ECO:0000250" key="5">
    <source>
        <dbReference type="UniProtKB" id="Q9LIK0"/>
    </source>
</evidence>
<evidence type="ECO:0000305" key="6"/>
<evidence type="ECO:0000312" key="7">
    <source>
        <dbReference type="EMBL" id="EEC68859.1"/>
    </source>
</evidence>